<evidence type="ECO:0000256" key="1">
    <source>
        <dbReference type="SAM" id="MobiDB-lite"/>
    </source>
</evidence>
<protein>
    <recommendedName>
        <fullName>Small histidine-alanine-rich protein</fullName>
        <shortName>SHARP</shortName>
    </recommendedName>
    <alternativeName>
        <fullName>Antigen 57</fullName>
    </alternativeName>
</protein>
<name>HRP_PLAFF</name>
<reference key="1">
    <citation type="journal article" date="1985" name="Nucleic Acids Res.">
        <title>Sequence of a cDNA encoding a small polymorphic histidine- and alanine-rich protein from Plasmodium falciparum.</title>
        <authorList>
            <person name="Stahl H.-D."/>
            <person name="Kemp D.J."/>
            <person name="Crewther P.E."/>
            <person name="Scanlon D.B."/>
            <person name="Woodrow G."/>
            <person name="Brown G.V."/>
            <person name="Bianco A.E."/>
            <person name="Anders R.F."/>
            <person name="Coppel R.L."/>
        </authorList>
    </citation>
    <scope>NUCLEOTIDE SEQUENCE [MRNA]</scope>
</reference>
<sequence>MVSFSKNKILSAAVFASVLLLDNNNSEFNNNLFSKNAKGLNSNKRLLHESQAHAGDAHHAHHVADAHHAHHAANAHHAANAHHAANAHHAANAHHAANAHHAANAHHAANAHHAANAHHAANAHHAANAHHAANAHHAANAHHAADANHGFHFNLHDNNSHTLHHAKANACFDDSHHDDAHHDGAHHDDAHHDGAHHDGAHHDGAHHDGAHHNATTHHLHH</sequence>
<proteinExistence type="evidence at transcript level"/>
<keyword id="KW-0461">Malaria</keyword>
<keyword id="KW-0677">Repeat</keyword>
<keyword id="KW-0732">Signal</keyword>
<feature type="signal peptide">
    <location>
        <begin position="1"/>
        <end position="21"/>
    </location>
</feature>
<feature type="chain" id="PRO_0000024539" description="Small histidine-alanine-rich protein">
    <location>
        <begin position="22"/>
        <end position="221"/>
    </location>
</feature>
<feature type="repeat" description="1-1">
    <location>
        <begin position="57"/>
        <end position="59"/>
    </location>
</feature>
<feature type="repeat" description="1-2">
    <location>
        <begin position="60"/>
        <end position="62"/>
    </location>
</feature>
<feature type="repeat" description="1-3; approximate">
    <location>
        <begin position="63"/>
        <end position="65"/>
    </location>
</feature>
<feature type="repeat" description="1-4">
    <location>
        <begin position="66"/>
        <end position="68"/>
    </location>
</feature>
<feature type="repeat" description="2-1">
    <location>
        <begin position="69"/>
        <end position="74"/>
    </location>
</feature>
<feature type="repeat" description="2-2">
    <location>
        <begin position="75"/>
        <end position="80"/>
    </location>
</feature>
<feature type="repeat" description="2-3">
    <location>
        <begin position="81"/>
        <end position="86"/>
    </location>
</feature>
<feature type="repeat" description="2-4">
    <location>
        <begin position="87"/>
        <end position="92"/>
    </location>
</feature>
<feature type="repeat" description="2-5">
    <location>
        <begin position="93"/>
        <end position="98"/>
    </location>
</feature>
<feature type="repeat" description="2-6">
    <location>
        <begin position="99"/>
        <end position="104"/>
    </location>
</feature>
<feature type="repeat" description="2-7">
    <location>
        <begin position="105"/>
        <end position="110"/>
    </location>
</feature>
<feature type="repeat" description="2-8">
    <location>
        <begin position="111"/>
        <end position="116"/>
    </location>
</feature>
<feature type="repeat" description="2-9">
    <location>
        <begin position="117"/>
        <end position="122"/>
    </location>
</feature>
<feature type="repeat" description="2-10">
    <location>
        <begin position="123"/>
        <end position="128"/>
    </location>
</feature>
<feature type="repeat" description="2-11">
    <location>
        <begin position="129"/>
        <end position="134"/>
    </location>
</feature>
<feature type="repeat" description="2-12">
    <location>
        <begin position="135"/>
        <end position="140"/>
    </location>
</feature>
<feature type="repeat" description="2-13; approximate">
    <location>
        <begin position="141"/>
        <end position="146"/>
    </location>
</feature>
<feature type="repeat" description="3-1">
    <location>
        <begin position="176"/>
        <end position="180"/>
    </location>
</feature>
<feature type="repeat" description="3-2">
    <location>
        <begin position="181"/>
        <end position="185"/>
    </location>
</feature>
<feature type="repeat" description="3-3">
    <location>
        <begin position="186"/>
        <end position="190"/>
    </location>
</feature>
<feature type="repeat" description="3-4">
    <location>
        <begin position="191"/>
        <end position="195"/>
    </location>
</feature>
<feature type="repeat" description="3-5">
    <location>
        <begin position="196"/>
        <end position="200"/>
    </location>
</feature>
<feature type="repeat" description="3-6">
    <location>
        <begin position="201"/>
        <end position="205"/>
    </location>
</feature>
<feature type="repeat" description="3-7">
    <location>
        <begin position="206"/>
        <end position="210"/>
    </location>
</feature>
<feature type="region of interest" description="Disordered" evidence="1">
    <location>
        <begin position="52"/>
        <end position="141"/>
    </location>
</feature>
<feature type="region of interest" description="4 X 3 AA approximate tandem repeats of A-H-H">
    <location>
        <begin position="57"/>
        <end position="68"/>
    </location>
</feature>
<feature type="region of interest" description="13 X 6 AA approximate tandem repeats of A-H-H-A-A-N">
    <location>
        <begin position="69"/>
        <end position="146"/>
    </location>
</feature>
<feature type="region of interest" description="7 X 5 AA tandem repeats of H-H-D-[DG]-A">
    <location>
        <begin position="176"/>
        <end position="210"/>
    </location>
</feature>
<feature type="region of interest" description="Disordered" evidence="1">
    <location>
        <begin position="180"/>
        <end position="221"/>
    </location>
</feature>
<feature type="compositionally biased region" description="Basic and acidic residues" evidence="1">
    <location>
        <begin position="52"/>
        <end position="67"/>
    </location>
</feature>
<feature type="compositionally biased region" description="Low complexity" evidence="1">
    <location>
        <begin position="75"/>
        <end position="141"/>
    </location>
</feature>
<feature type="compositionally biased region" description="Basic and acidic residues" evidence="1">
    <location>
        <begin position="180"/>
        <end position="211"/>
    </location>
</feature>
<accession>P04930</accession>
<dbReference type="EMBL" id="X03144">
    <property type="protein sequence ID" value="CAA26916.1"/>
    <property type="molecule type" value="mRNA"/>
</dbReference>
<dbReference type="PIR" id="A24117">
    <property type="entry name" value="KGZQHF"/>
</dbReference>
<dbReference type="InterPro" id="IPR008779">
    <property type="entry name" value="Plasmodium_HRP"/>
</dbReference>
<dbReference type="Pfam" id="PF05403">
    <property type="entry name" value="Plasmodium_HRP"/>
    <property type="match status" value="1"/>
</dbReference>
<organism>
    <name type="scientific">Plasmodium falciparum (isolate FC27 / Papua New Guinea)</name>
    <dbReference type="NCBI Taxonomy" id="5837"/>
    <lineage>
        <taxon>Eukaryota</taxon>
        <taxon>Sar</taxon>
        <taxon>Alveolata</taxon>
        <taxon>Apicomplexa</taxon>
        <taxon>Aconoidasida</taxon>
        <taxon>Haemosporida</taxon>
        <taxon>Plasmodiidae</taxon>
        <taxon>Plasmodium</taxon>
        <taxon>Plasmodium (Laverania)</taxon>
    </lineage>
</organism>